<accession>Q9LHZ7</accession>
<accession>B7EXX7</accession>
<accession>Q7PC68</accession>
<accession>Q8W1N0</accession>
<proteinExistence type="evidence at transcript level"/>
<organism>
    <name type="scientific">Oryza sativa subsp. japonica</name>
    <name type="common">Rice</name>
    <dbReference type="NCBI Taxonomy" id="39947"/>
    <lineage>
        <taxon>Eukaryota</taxon>
        <taxon>Viridiplantae</taxon>
        <taxon>Streptophyta</taxon>
        <taxon>Embryophyta</taxon>
        <taxon>Tracheophyta</taxon>
        <taxon>Spermatophyta</taxon>
        <taxon>Magnoliopsida</taxon>
        <taxon>Liliopsida</taxon>
        <taxon>Poales</taxon>
        <taxon>Poaceae</taxon>
        <taxon>BOP clade</taxon>
        <taxon>Oryzoideae</taxon>
        <taxon>Oryzeae</taxon>
        <taxon>Oryzinae</taxon>
        <taxon>Oryza</taxon>
        <taxon>Oryza sativa</taxon>
    </lineage>
</organism>
<evidence type="ECO:0000255" key="1"/>
<evidence type="ECO:0000256" key="2">
    <source>
        <dbReference type="SAM" id="MobiDB-lite"/>
    </source>
</evidence>
<evidence type="ECO:0000305" key="3"/>
<name>CSLD2_ORYSJ</name>
<protein>
    <recommendedName>
        <fullName>Cellulose synthase-like protein D2</fullName>
        <ecNumber>2.4.1.-</ecNumber>
    </recommendedName>
    <alternativeName>
        <fullName>OsCslD2</fullName>
    </alternativeName>
</protein>
<gene>
    <name type="primary">CSLD2</name>
    <name type="ordered locus">Os06g0111800</name>
    <name type="ordered locus">LOC_Os06g02180</name>
    <name type="ORF">OsJ_019064</name>
    <name type="ORF">P0029D06.17</name>
</gene>
<comment type="function">
    <text>Thought to be a Golgi-localized beta-glycan synthase that polymerize the backbones of noncellulosic polysaccharides (hemicelluloses) of plant cell wall.</text>
</comment>
<comment type="subcellular location">
    <subcellularLocation>
        <location evidence="3">Golgi apparatus membrane</location>
        <topology evidence="3">Multi-pass membrane protein</topology>
    </subcellularLocation>
</comment>
<comment type="similarity">
    <text evidence="3">Belongs to the glycosyltransferase 2 family. Plant cellulose synthase-like D subfamily.</text>
</comment>
<sequence length="1170" mass="130138">MASSGGGGLRHSNSSRLSRMSYSGEDGRAQAPGGGGDRPMVTFARRTHSGRYVSYSRDDLDSELGNSGDMSPESGQEFLNYHVTIPATPDNQPMDPAISARVEEQYVSNSLFTGGFNSVTRAHLMDKVIESEASHPQMAGAKGSSCAINGCDAKVMSDERGDDILPCECDFKICADCFADAVKNGGACPGCKDPYKATELDDVVGARPTLSLPPPPGGLPASRMERRLSIMRSQKAMTRSQTGDWDHNRWLFETKGTYGYGNAIWPKENEVDNGGGGGGGGGLGGGDGQPAEFTSKPWRPLTRKLKIPAGVLSPYRLLILIRMAVLGLFLAWRIKHKNEDAMWLWGMSVVCELWFGLSWLLDQLPKLCPVNRATDLAVLKDKFETPTPSNPNGRSDLPGLDIFVSTADPEKEPPLVTANTILSILAADYPVEKLSCYVSDDGGALLTFEAMAEAASFANMWVPFCRKHDIEPRNPESYFNLKRDPYKNKVRSDFVKDRRRVKREYDEFKVRINSLPDSIRRRSDAYHAREEIKAMKRQREAALDDVVEAVKIPKATWMADGTHWPGTWIQPSAEHARGDHAGIIQVMLKPPSDDPLYGTSGEEGRPLDFTEVDIRLPMLVYVSREKRPGYDHNKKAGAMNALVRSSAVMSNGPFILNLDCDHYVYNSQAFREGMCFMMDRGGDRIGYVQFPQRFEGIDPSDRYANHNTVFFDVNMRALDGIMGPVYVGTGCLFRRIALYGFDPPRSKEHSGCCSCCFPQRRKVKTSTVASEERQALRMADFDDEEMNMSQFPKKFGNSNFLINSIPIAEFQGRPLADHPGVKNGRPPGALTVPRDLLDASTVAEAISVISCWYEDKTEWGQRVGWIYGSVTEDVVTGYRMHNRGWKSVYCVTKRDAFRGTAPINLTDRLHQVLRWATGSVEIFFSRNNALLASRKMKFLQRIAYLNVGIYPFTSIFLIVYCFLPALSLFSGQFIVRTLNVTFLTYLLVITLTMCMLAVLEIKWSGISLEEWWRNEQFWLIGGTSAHLAAVLQGLLKVIAGIEISFTLTSKSGGDEADDEFADLYIVKWTSLMIPPIVIMMVNLIAIAVGFSRTIYSEIPQWSKLLGGVFFSFWVLAHLYPFAKGLMGRRGRTPTIVFVWSGLLAITISLLWVAINPPSQNSQIGGSFTFP</sequence>
<feature type="chain" id="PRO_0000319393" description="Cellulose synthase-like protein D2">
    <location>
        <begin position="1"/>
        <end position="1170"/>
    </location>
</feature>
<feature type="transmembrane region" description="Helical" evidence="1">
    <location>
        <begin position="311"/>
        <end position="331"/>
    </location>
</feature>
<feature type="transmembrane region" description="Helical" evidence="1">
    <location>
        <begin position="341"/>
        <end position="361"/>
    </location>
</feature>
<feature type="transmembrane region" description="Helical" evidence="1">
    <location>
        <begin position="955"/>
        <end position="975"/>
    </location>
</feature>
<feature type="transmembrane region" description="Helical" evidence="1">
    <location>
        <begin position="981"/>
        <end position="1001"/>
    </location>
</feature>
<feature type="transmembrane region" description="Helical" evidence="1">
    <location>
        <begin position="1027"/>
        <end position="1047"/>
    </location>
</feature>
<feature type="transmembrane region" description="Helical" evidence="1">
    <location>
        <begin position="1070"/>
        <end position="1090"/>
    </location>
</feature>
<feature type="transmembrane region" description="Helical" evidence="1">
    <location>
        <begin position="1104"/>
        <end position="1124"/>
    </location>
</feature>
<feature type="transmembrane region" description="Helical" evidence="1">
    <location>
        <begin position="1134"/>
        <end position="1154"/>
    </location>
</feature>
<feature type="region of interest" description="Disordered" evidence="2">
    <location>
        <begin position="1"/>
        <end position="48"/>
    </location>
</feature>
<feature type="region of interest" description="Disordered" evidence="2">
    <location>
        <begin position="54"/>
        <end position="73"/>
    </location>
</feature>
<feature type="region of interest" description="Disordered" evidence="2">
    <location>
        <begin position="269"/>
        <end position="295"/>
    </location>
</feature>
<feature type="coiled-coil region" evidence="1">
    <location>
        <begin position="527"/>
        <end position="551"/>
    </location>
</feature>
<feature type="compositionally biased region" description="Low complexity" evidence="2">
    <location>
        <begin position="10"/>
        <end position="24"/>
    </location>
</feature>
<feature type="compositionally biased region" description="Gly residues" evidence="2">
    <location>
        <begin position="273"/>
        <end position="288"/>
    </location>
</feature>
<feature type="active site" evidence="1">
    <location>
        <position position="441"/>
    </location>
</feature>
<feature type="active site" evidence="1">
    <location>
        <position position="873"/>
    </location>
</feature>
<keyword id="KW-0961">Cell wall biogenesis/degradation</keyword>
<keyword id="KW-0175">Coiled coil</keyword>
<keyword id="KW-0328">Glycosyltransferase</keyword>
<keyword id="KW-0333">Golgi apparatus</keyword>
<keyword id="KW-0472">Membrane</keyword>
<keyword id="KW-1185">Reference proteome</keyword>
<keyword id="KW-0808">Transferase</keyword>
<keyword id="KW-0812">Transmembrane</keyword>
<keyword id="KW-1133">Transmembrane helix</keyword>
<reference key="1">
    <citation type="journal article" date="2005" name="Nature">
        <title>The map-based sequence of the rice genome.</title>
        <authorList>
            <consortium name="International rice genome sequencing project (IRGSP)"/>
        </authorList>
    </citation>
    <scope>NUCLEOTIDE SEQUENCE [LARGE SCALE GENOMIC DNA]</scope>
    <source>
        <strain>cv. Nipponbare</strain>
    </source>
</reference>
<reference key="2">
    <citation type="journal article" date="2008" name="Nucleic Acids Res.">
        <title>The rice annotation project database (RAP-DB): 2008 update.</title>
        <authorList>
            <consortium name="The rice annotation project (RAP)"/>
        </authorList>
    </citation>
    <scope>GENOME REANNOTATION</scope>
    <source>
        <strain>cv. Nipponbare</strain>
    </source>
</reference>
<reference key="3">
    <citation type="journal article" date="2013" name="Rice">
        <title>Improvement of the Oryza sativa Nipponbare reference genome using next generation sequence and optical map data.</title>
        <authorList>
            <person name="Kawahara Y."/>
            <person name="de la Bastide M."/>
            <person name="Hamilton J.P."/>
            <person name="Kanamori H."/>
            <person name="McCombie W.R."/>
            <person name="Ouyang S."/>
            <person name="Schwartz D.C."/>
            <person name="Tanaka T."/>
            <person name="Wu J."/>
            <person name="Zhou S."/>
            <person name="Childs K.L."/>
            <person name="Davidson R.M."/>
            <person name="Lin H."/>
            <person name="Quesada-Ocampo L."/>
            <person name="Vaillancourt B."/>
            <person name="Sakai H."/>
            <person name="Lee S.S."/>
            <person name="Kim J."/>
            <person name="Numa H."/>
            <person name="Itoh T."/>
            <person name="Buell C.R."/>
            <person name="Matsumoto T."/>
        </authorList>
    </citation>
    <scope>GENOME REANNOTATION</scope>
    <source>
        <strain>cv. Nipponbare</strain>
    </source>
</reference>
<reference key="4">
    <citation type="journal article" date="2005" name="PLoS Biol.">
        <title>The genomes of Oryza sativa: a history of duplications.</title>
        <authorList>
            <person name="Yu J."/>
            <person name="Wang J."/>
            <person name="Lin W."/>
            <person name="Li S."/>
            <person name="Li H."/>
            <person name="Zhou J."/>
            <person name="Ni P."/>
            <person name="Dong W."/>
            <person name="Hu S."/>
            <person name="Zeng C."/>
            <person name="Zhang J."/>
            <person name="Zhang Y."/>
            <person name="Li R."/>
            <person name="Xu Z."/>
            <person name="Li S."/>
            <person name="Li X."/>
            <person name="Zheng H."/>
            <person name="Cong L."/>
            <person name="Lin L."/>
            <person name="Yin J."/>
            <person name="Geng J."/>
            <person name="Li G."/>
            <person name="Shi J."/>
            <person name="Liu J."/>
            <person name="Lv H."/>
            <person name="Li J."/>
            <person name="Wang J."/>
            <person name="Deng Y."/>
            <person name="Ran L."/>
            <person name="Shi X."/>
            <person name="Wang X."/>
            <person name="Wu Q."/>
            <person name="Li C."/>
            <person name="Ren X."/>
            <person name="Wang J."/>
            <person name="Wang X."/>
            <person name="Li D."/>
            <person name="Liu D."/>
            <person name="Zhang X."/>
            <person name="Ji Z."/>
            <person name="Zhao W."/>
            <person name="Sun Y."/>
            <person name="Zhang Z."/>
            <person name="Bao J."/>
            <person name="Han Y."/>
            <person name="Dong L."/>
            <person name="Ji J."/>
            <person name="Chen P."/>
            <person name="Wu S."/>
            <person name="Liu J."/>
            <person name="Xiao Y."/>
            <person name="Bu D."/>
            <person name="Tan J."/>
            <person name="Yang L."/>
            <person name="Ye C."/>
            <person name="Zhang J."/>
            <person name="Xu J."/>
            <person name="Zhou Y."/>
            <person name="Yu Y."/>
            <person name="Zhang B."/>
            <person name="Zhuang S."/>
            <person name="Wei H."/>
            <person name="Liu B."/>
            <person name="Lei M."/>
            <person name="Yu H."/>
            <person name="Li Y."/>
            <person name="Xu H."/>
            <person name="Wei S."/>
            <person name="He X."/>
            <person name="Fang L."/>
            <person name="Zhang Z."/>
            <person name="Zhang Y."/>
            <person name="Huang X."/>
            <person name="Su Z."/>
            <person name="Tong W."/>
            <person name="Li J."/>
            <person name="Tong Z."/>
            <person name="Li S."/>
            <person name="Ye J."/>
            <person name="Wang L."/>
            <person name="Fang L."/>
            <person name="Lei T."/>
            <person name="Chen C.-S."/>
            <person name="Chen H.-C."/>
            <person name="Xu Z."/>
            <person name="Li H."/>
            <person name="Huang H."/>
            <person name="Zhang F."/>
            <person name="Xu H."/>
            <person name="Li N."/>
            <person name="Zhao C."/>
            <person name="Li S."/>
            <person name="Dong L."/>
            <person name="Huang Y."/>
            <person name="Li L."/>
            <person name="Xi Y."/>
            <person name="Qi Q."/>
            <person name="Li W."/>
            <person name="Zhang B."/>
            <person name="Hu W."/>
            <person name="Zhang Y."/>
            <person name="Tian X."/>
            <person name="Jiao Y."/>
            <person name="Liang X."/>
            <person name="Jin J."/>
            <person name="Gao L."/>
            <person name="Zheng W."/>
            <person name="Hao B."/>
            <person name="Liu S.-M."/>
            <person name="Wang W."/>
            <person name="Yuan L."/>
            <person name="Cao M."/>
            <person name="McDermott J."/>
            <person name="Samudrala R."/>
            <person name="Wang J."/>
            <person name="Wong G.K.-S."/>
            <person name="Yang H."/>
        </authorList>
    </citation>
    <scope>NUCLEOTIDE SEQUENCE [LARGE SCALE GENOMIC DNA]</scope>
    <source>
        <strain>cv. Nipponbare</strain>
    </source>
</reference>
<reference key="5">
    <citation type="journal article" date="2003" name="Science">
        <title>Collection, mapping, and annotation of over 28,000 cDNA clones from japonica rice.</title>
        <authorList>
            <consortium name="The rice full-length cDNA consortium"/>
        </authorList>
    </citation>
    <scope>NUCLEOTIDE SEQUENCE [LARGE SCALE MRNA]</scope>
    <source>
        <strain>cv. Nipponbare</strain>
    </source>
</reference>
<reference key="6">
    <citation type="journal article" date="2002" name="Plant Physiol.">
        <title>Cellulose synthase-like genes of rice.</title>
        <authorList>
            <person name="Hazen S.P."/>
            <person name="Scott-Craig J.S."/>
            <person name="Walton J.D."/>
        </authorList>
    </citation>
    <scope>NUCLEOTIDE SEQUENCE [MRNA] OF 817-998</scope>
    <scope>IDENTIFICATION</scope>
</reference>
<reference key="7">
    <citation type="journal article" date="2007" name="Plant Physiol.">
        <title>OsCSLD1, a cellulose synthase-like D1 gene, is required for root hair morphogenesis in rice.</title>
        <authorList>
            <person name="Kim C.M."/>
            <person name="Park S.H."/>
            <person name="Je B.I."/>
            <person name="Park S.H."/>
            <person name="Park S.J."/>
            <person name="Piao H.L."/>
            <person name="Eun M.Y."/>
            <person name="Dolan L."/>
            <person name="Han C.-D."/>
        </authorList>
    </citation>
    <scope>TISSUE SPECIFICITY</scope>
</reference>
<dbReference type="EC" id="2.4.1.-"/>
<dbReference type="EMBL" id="AP001552">
    <property type="protein sequence ID" value="BAA93027.1"/>
    <property type="molecule type" value="Genomic_DNA"/>
</dbReference>
<dbReference type="EMBL" id="AP008212">
    <property type="protein sequence ID" value="BAF18503.1"/>
    <property type="molecule type" value="Genomic_DNA"/>
</dbReference>
<dbReference type="EMBL" id="AP014962">
    <property type="protein sequence ID" value="BAS95797.1"/>
    <property type="molecule type" value="Genomic_DNA"/>
</dbReference>
<dbReference type="EMBL" id="CM000143">
    <property type="protein sequence ID" value="EAZ35581.1"/>
    <property type="molecule type" value="Genomic_DNA"/>
</dbReference>
<dbReference type="EMBL" id="AK105393">
    <property type="protein sequence ID" value="BAG97224.1"/>
    <property type="molecule type" value="mRNA"/>
</dbReference>
<dbReference type="EMBL" id="AF435649">
    <property type="protein sequence ID" value="AAL38534.1"/>
    <property type="molecule type" value="mRNA"/>
</dbReference>
<dbReference type="EMBL" id="BK000900">
    <property type="protein sequence ID" value="DAA01753.1"/>
    <property type="molecule type" value="Genomic_DNA"/>
</dbReference>
<dbReference type="RefSeq" id="XP_015643356.1">
    <property type="nucleotide sequence ID" value="XM_015787870.1"/>
</dbReference>
<dbReference type="RefSeq" id="XP_015643357.1">
    <property type="nucleotide sequence ID" value="XM_015787871.1"/>
</dbReference>
<dbReference type="SMR" id="Q9LHZ7"/>
<dbReference type="FunCoup" id="Q9LHZ7">
    <property type="interactions" value="804"/>
</dbReference>
<dbReference type="STRING" id="39947.Q9LHZ7"/>
<dbReference type="CAZy" id="GT2">
    <property type="family name" value="Glycosyltransferase Family 2"/>
</dbReference>
<dbReference type="PaxDb" id="39947-Q9LHZ7"/>
<dbReference type="EnsemblPlants" id="Os06t0111800-01">
    <property type="protein sequence ID" value="Os06t0111800-01"/>
    <property type="gene ID" value="Os06g0111800"/>
</dbReference>
<dbReference type="EnsemblPlants" id="Os06t0111800-02">
    <property type="protein sequence ID" value="Os06t0111800-02"/>
    <property type="gene ID" value="Os06g0111800"/>
</dbReference>
<dbReference type="GeneID" id="4339895"/>
<dbReference type="Gramene" id="Os06t0111800-01">
    <property type="protein sequence ID" value="Os06t0111800-01"/>
    <property type="gene ID" value="Os06g0111800"/>
</dbReference>
<dbReference type="Gramene" id="Os06t0111800-02">
    <property type="protein sequence ID" value="Os06t0111800-02"/>
    <property type="gene ID" value="Os06g0111800"/>
</dbReference>
<dbReference type="KEGG" id="dosa:Os06g0111800"/>
<dbReference type="KEGG" id="osa:4339895"/>
<dbReference type="eggNOG" id="ENOG502QU14">
    <property type="taxonomic scope" value="Eukaryota"/>
</dbReference>
<dbReference type="HOGENOM" id="CLU_001418_1_0_1"/>
<dbReference type="InParanoid" id="Q9LHZ7"/>
<dbReference type="OMA" id="KKHASMA"/>
<dbReference type="OrthoDB" id="72851at2759"/>
<dbReference type="PlantReactome" id="R-OSA-1119314">
    <property type="pathway name" value="Cellulose biosynthesis"/>
</dbReference>
<dbReference type="Proteomes" id="UP000000763">
    <property type="component" value="Chromosome 6"/>
</dbReference>
<dbReference type="Proteomes" id="UP000007752">
    <property type="component" value="Chromosome 6"/>
</dbReference>
<dbReference type="Proteomes" id="UP000059680">
    <property type="component" value="Chromosome 6"/>
</dbReference>
<dbReference type="ExpressionAtlas" id="Q9LHZ7">
    <property type="expression patterns" value="baseline and differential"/>
</dbReference>
<dbReference type="GO" id="GO:0000139">
    <property type="term" value="C:Golgi membrane"/>
    <property type="evidence" value="ECO:0007669"/>
    <property type="project" value="UniProtKB-SubCell"/>
</dbReference>
<dbReference type="GO" id="GO:0005886">
    <property type="term" value="C:plasma membrane"/>
    <property type="evidence" value="ECO:0000318"/>
    <property type="project" value="GO_Central"/>
</dbReference>
<dbReference type="GO" id="GO:0016760">
    <property type="term" value="F:cellulose synthase (UDP-forming) activity"/>
    <property type="evidence" value="ECO:0007669"/>
    <property type="project" value="InterPro"/>
</dbReference>
<dbReference type="GO" id="GO:0071555">
    <property type="term" value="P:cell wall organization"/>
    <property type="evidence" value="ECO:0007669"/>
    <property type="project" value="UniProtKB-KW"/>
</dbReference>
<dbReference type="GO" id="GO:0030244">
    <property type="term" value="P:cellulose biosynthetic process"/>
    <property type="evidence" value="ECO:0007669"/>
    <property type="project" value="InterPro"/>
</dbReference>
<dbReference type="GO" id="GO:0009833">
    <property type="term" value="P:plant-type primary cell wall biogenesis"/>
    <property type="evidence" value="ECO:0000318"/>
    <property type="project" value="GO_Central"/>
</dbReference>
<dbReference type="FunFam" id="3.30.40.10:FF:000229">
    <property type="entry name" value="Cellulose synthase-like protein D3"/>
    <property type="match status" value="1"/>
</dbReference>
<dbReference type="FunFam" id="3.90.550.10:FF:000040">
    <property type="entry name" value="cellulose synthase-like protein D3"/>
    <property type="match status" value="1"/>
</dbReference>
<dbReference type="Gene3D" id="3.90.550.10">
    <property type="entry name" value="Spore Coat Polysaccharide Biosynthesis Protein SpsA, Chain A"/>
    <property type="match status" value="1"/>
</dbReference>
<dbReference type="Gene3D" id="3.30.40.10">
    <property type="entry name" value="Zinc/RING finger domain, C3HC4 (zinc finger)"/>
    <property type="match status" value="1"/>
</dbReference>
<dbReference type="InterPro" id="IPR005150">
    <property type="entry name" value="Cellulose_synth"/>
</dbReference>
<dbReference type="InterPro" id="IPR029044">
    <property type="entry name" value="Nucleotide-diphossugar_trans"/>
</dbReference>
<dbReference type="InterPro" id="IPR013083">
    <property type="entry name" value="Znf_RING/FYVE/PHD"/>
</dbReference>
<dbReference type="PANTHER" id="PTHR13301">
    <property type="entry name" value="X-BOX TRANSCRIPTION FACTOR-RELATED"/>
    <property type="match status" value="1"/>
</dbReference>
<dbReference type="Pfam" id="PF03552">
    <property type="entry name" value="Cellulose_synt"/>
    <property type="match status" value="1"/>
</dbReference>
<dbReference type="Pfam" id="PF14570">
    <property type="entry name" value="zf-RING_4"/>
    <property type="match status" value="1"/>
</dbReference>
<dbReference type="SUPFAM" id="SSF53448">
    <property type="entry name" value="Nucleotide-diphospho-sugar transferases"/>
    <property type="match status" value="1"/>
</dbReference>
<dbReference type="SUPFAM" id="SSF57850">
    <property type="entry name" value="RING/U-box"/>
    <property type="match status" value="1"/>
</dbReference>